<gene>
    <name evidence="1" type="primary">rpoB</name>
    <name type="ordered locus">Bmul_0241</name>
    <name type="ordered locus">BMULJ_03013</name>
</gene>
<feature type="chain" id="PRO_1000141671" description="DNA-directed RNA polymerase subunit beta">
    <location>
        <begin position="1"/>
        <end position="1368"/>
    </location>
</feature>
<organism>
    <name type="scientific">Burkholderia multivorans (strain ATCC 17616 / 249)</name>
    <dbReference type="NCBI Taxonomy" id="395019"/>
    <lineage>
        <taxon>Bacteria</taxon>
        <taxon>Pseudomonadati</taxon>
        <taxon>Pseudomonadota</taxon>
        <taxon>Betaproteobacteria</taxon>
        <taxon>Burkholderiales</taxon>
        <taxon>Burkholderiaceae</taxon>
        <taxon>Burkholderia</taxon>
        <taxon>Burkholderia cepacia complex</taxon>
    </lineage>
</organism>
<keyword id="KW-0240">DNA-directed RNA polymerase</keyword>
<keyword id="KW-0548">Nucleotidyltransferase</keyword>
<keyword id="KW-1185">Reference proteome</keyword>
<keyword id="KW-0804">Transcription</keyword>
<keyword id="KW-0808">Transferase</keyword>
<protein>
    <recommendedName>
        <fullName evidence="1">DNA-directed RNA polymerase subunit beta</fullName>
        <shortName evidence="1">RNAP subunit beta</shortName>
        <ecNumber evidence="1">2.7.7.6</ecNumber>
    </recommendedName>
    <alternativeName>
        <fullName evidence="1">RNA polymerase subunit beta</fullName>
    </alternativeName>
    <alternativeName>
        <fullName evidence="1">Transcriptase subunit beta</fullName>
    </alternativeName>
</protein>
<dbReference type="EC" id="2.7.7.6" evidence="1"/>
<dbReference type="EMBL" id="CP000868">
    <property type="protein sequence ID" value="ABX13936.1"/>
    <property type="molecule type" value="Genomic_DNA"/>
</dbReference>
<dbReference type="EMBL" id="AP009385">
    <property type="protein sequence ID" value="BAG44898.1"/>
    <property type="molecule type" value="Genomic_DNA"/>
</dbReference>
<dbReference type="RefSeq" id="WP_006400665.1">
    <property type="nucleotide sequence ID" value="NC_010804.1"/>
</dbReference>
<dbReference type="SMR" id="A9ADI5"/>
<dbReference type="STRING" id="395019.BMULJ_03013"/>
<dbReference type="GeneID" id="89568633"/>
<dbReference type="KEGG" id="bmj:BMULJ_03013"/>
<dbReference type="KEGG" id="bmu:Bmul_0241"/>
<dbReference type="eggNOG" id="COG0085">
    <property type="taxonomic scope" value="Bacteria"/>
</dbReference>
<dbReference type="HOGENOM" id="CLU_000524_4_0_4"/>
<dbReference type="Proteomes" id="UP000008815">
    <property type="component" value="Chromosome 1"/>
</dbReference>
<dbReference type="GO" id="GO:0000428">
    <property type="term" value="C:DNA-directed RNA polymerase complex"/>
    <property type="evidence" value="ECO:0007669"/>
    <property type="project" value="UniProtKB-KW"/>
</dbReference>
<dbReference type="GO" id="GO:0003677">
    <property type="term" value="F:DNA binding"/>
    <property type="evidence" value="ECO:0007669"/>
    <property type="project" value="UniProtKB-UniRule"/>
</dbReference>
<dbReference type="GO" id="GO:0003899">
    <property type="term" value="F:DNA-directed RNA polymerase activity"/>
    <property type="evidence" value="ECO:0007669"/>
    <property type="project" value="UniProtKB-UniRule"/>
</dbReference>
<dbReference type="GO" id="GO:0032549">
    <property type="term" value="F:ribonucleoside binding"/>
    <property type="evidence" value="ECO:0007669"/>
    <property type="project" value="InterPro"/>
</dbReference>
<dbReference type="GO" id="GO:0006351">
    <property type="term" value="P:DNA-templated transcription"/>
    <property type="evidence" value="ECO:0007669"/>
    <property type="project" value="UniProtKB-UniRule"/>
</dbReference>
<dbReference type="CDD" id="cd00653">
    <property type="entry name" value="RNA_pol_B_RPB2"/>
    <property type="match status" value="1"/>
</dbReference>
<dbReference type="FunFam" id="2.40.50.100:FF:000006">
    <property type="entry name" value="DNA-directed RNA polymerase subunit beta"/>
    <property type="match status" value="1"/>
</dbReference>
<dbReference type="FunFam" id="2.40.50.150:FF:000001">
    <property type="entry name" value="DNA-directed RNA polymerase subunit beta"/>
    <property type="match status" value="1"/>
</dbReference>
<dbReference type="FunFam" id="3.90.1800.10:FF:000001">
    <property type="entry name" value="DNA-directed RNA polymerase subunit beta"/>
    <property type="match status" value="1"/>
</dbReference>
<dbReference type="Gene3D" id="2.40.50.100">
    <property type="match status" value="1"/>
</dbReference>
<dbReference type="Gene3D" id="2.40.50.150">
    <property type="match status" value="1"/>
</dbReference>
<dbReference type="Gene3D" id="3.90.1100.10">
    <property type="match status" value="2"/>
</dbReference>
<dbReference type="Gene3D" id="2.30.150.10">
    <property type="entry name" value="DNA-directed RNA polymerase, beta subunit, external 1 domain"/>
    <property type="match status" value="1"/>
</dbReference>
<dbReference type="Gene3D" id="2.40.270.10">
    <property type="entry name" value="DNA-directed RNA polymerase, subunit 2, domain 6"/>
    <property type="match status" value="1"/>
</dbReference>
<dbReference type="Gene3D" id="3.90.1800.10">
    <property type="entry name" value="RNA polymerase alpha subunit dimerisation domain"/>
    <property type="match status" value="1"/>
</dbReference>
<dbReference type="Gene3D" id="3.90.1110.10">
    <property type="entry name" value="RNA polymerase Rpb2, domain 2"/>
    <property type="match status" value="1"/>
</dbReference>
<dbReference type="HAMAP" id="MF_01321">
    <property type="entry name" value="RNApol_bact_RpoB"/>
    <property type="match status" value="1"/>
</dbReference>
<dbReference type="InterPro" id="IPR042107">
    <property type="entry name" value="DNA-dir_RNA_pol_bsu_ext_1_sf"/>
</dbReference>
<dbReference type="InterPro" id="IPR019462">
    <property type="entry name" value="DNA-dir_RNA_pol_bsu_external_1"/>
</dbReference>
<dbReference type="InterPro" id="IPR015712">
    <property type="entry name" value="DNA-dir_RNA_pol_su2"/>
</dbReference>
<dbReference type="InterPro" id="IPR007120">
    <property type="entry name" value="DNA-dir_RNAP_su2_dom"/>
</dbReference>
<dbReference type="InterPro" id="IPR037033">
    <property type="entry name" value="DNA-dir_RNAP_su2_hyb_sf"/>
</dbReference>
<dbReference type="InterPro" id="IPR010243">
    <property type="entry name" value="RNA_pol_bsu_bac"/>
</dbReference>
<dbReference type="InterPro" id="IPR007121">
    <property type="entry name" value="RNA_pol_bsu_CS"/>
</dbReference>
<dbReference type="InterPro" id="IPR007644">
    <property type="entry name" value="RNA_pol_bsu_protrusion"/>
</dbReference>
<dbReference type="InterPro" id="IPR007642">
    <property type="entry name" value="RNA_pol_Rpb2_2"/>
</dbReference>
<dbReference type="InterPro" id="IPR037034">
    <property type="entry name" value="RNA_pol_Rpb2_2_sf"/>
</dbReference>
<dbReference type="InterPro" id="IPR007645">
    <property type="entry name" value="RNA_pol_Rpb2_3"/>
</dbReference>
<dbReference type="InterPro" id="IPR007641">
    <property type="entry name" value="RNA_pol_Rpb2_7"/>
</dbReference>
<dbReference type="InterPro" id="IPR014724">
    <property type="entry name" value="RNA_pol_RPB2_OB-fold"/>
</dbReference>
<dbReference type="NCBIfam" id="NF001616">
    <property type="entry name" value="PRK00405.1"/>
    <property type="match status" value="1"/>
</dbReference>
<dbReference type="NCBIfam" id="TIGR02013">
    <property type="entry name" value="rpoB"/>
    <property type="match status" value="1"/>
</dbReference>
<dbReference type="PANTHER" id="PTHR20856">
    <property type="entry name" value="DNA-DIRECTED RNA POLYMERASE I SUBUNIT 2"/>
    <property type="match status" value="1"/>
</dbReference>
<dbReference type="Pfam" id="PF04563">
    <property type="entry name" value="RNA_pol_Rpb2_1"/>
    <property type="match status" value="1"/>
</dbReference>
<dbReference type="Pfam" id="PF04561">
    <property type="entry name" value="RNA_pol_Rpb2_2"/>
    <property type="match status" value="2"/>
</dbReference>
<dbReference type="Pfam" id="PF04565">
    <property type="entry name" value="RNA_pol_Rpb2_3"/>
    <property type="match status" value="1"/>
</dbReference>
<dbReference type="Pfam" id="PF10385">
    <property type="entry name" value="RNA_pol_Rpb2_45"/>
    <property type="match status" value="1"/>
</dbReference>
<dbReference type="Pfam" id="PF00562">
    <property type="entry name" value="RNA_pol_Rpb2_6"/>
    <property type="match status" value="1"/>
</dbReference>
<dbReference type="Pfam" id="PF04560">
    <property type="entry name" value="RNA_pol_Rpb2_7"/>
    <property type="match status" value="1"/>
</dbReference>
<dbReference type="SUPFAM" id="SSF64484">
    <property type="entry name" value="beta and beta-prime subunits of DNA dependent RNA-polymerase"/>
    <property type="match status" value="1"/>
</dbReference>
<dbReference type="PROSITE" id="PS01166">
    <property type="entry name" value="RNA_POL_BETA"/>
    <property type="match status" value="1"/>
</dbReference>
<accession>A9ADI5</accession>
<reference key="1">
    <citation type="submission" date="2007-10" db="EMBL/GenBank/DDBJ databases">
        <title>Complete sequence of chromosome 1 of Burkholderia multivorans ATCC 17616.</title>
        <authorList>
            <person name="Copeland A."/>
            <person name="Lucas S."/>
            <person name="Lapidus A."/>
            <person name="Barry K."/>
            <person name="Glavina del Rio T."/>
            <person name="Dalin E."/>
            <person name="Tice H."/>
            <person name="Pitluck S."/>
            <person name="Chain P."/>
            <person name="Malfatti S."/>
            <person name="Shin M."/>
            <person name="Vergez L."/>
            <person name="Schmutz J."/>
            <person name="Larimer F."/>
            <person name="Land M."/>
            <person name="Hauser L."/>
            <person name="Kyrpides N."/>
            <person name="Kim E."/>
            <person name="Tiedje J."/>
            <person name="Richardson P."/>
        </authorList>
    </citation>
    <scope>NUCLEOTIDE SEQUENCE [LARGE SCALE GENOMIC DNA]</scope>
    <source>
        <strain>ATCC 17616 / 249</strain>
    </source>
</reference>
<reference key="2">
    <citation type="submission" date="2007-04" db="EMBL/GenBank/DDBJ databases">
        <title>Complete genome sequence of Burkholderia multivorans ATCC 17616.</title>
        <authorList>
            <person name="Ohtsubo Y."/>
            <person name="Yamashita A."/>
            <person name="Kurokawa K."/>
            <person name="Takami H."/>
            <person name="Yuhara S."/>
            <person name="Nishiyama E."/>
            <person name="Endo R."/>
            <person name="Miyazaki R."/>
            <person name="Ono A."/>
            <person name="Yano K."/>
            <person name="Ito M."/>
            <person name="Sota M."/>
            <person name="Yuji N."/>
            <person name="Hattori M."/>
            <person name="Tsuda M."/>
        </authorList>
    </citation>
    <scope>NUCLEOTIDE SEQUENCE [LARGE SCALE GENOMIC DNA]</scope>
    <source>
        <strain>ATCC 17616 / 249</strain>
    </source>
</reference>
<comment type="function">
    <text evidence="1">DNA-dependent RNA polymerase catalyzes the transcription of DNA into RNA using the four ribonucleoside triphosphates as substrates.</text>
</comment>
<comment type="catalytic activity">
    <reaction evidence="1">
        <text>RNA(n) + a ribonucleoside 5'-triphosphate = RNA(n+1) + diphosphate</text>
        <dbReference type="Rhea" id="RHEA:21248"/>
        <dbReference type="Rhea" id="RHEA-COMP:14527"/>
        <dbReference type="Rhea" id="RHEA-COMP:17342"/>
        <dbReference type="ChEBI" id="CHEBI:33019"/>
        <dbReference type="ChEBI" id="CHEBI:61557"/>
        <dbReference type="ChEBI" id="CHEBI:140395"/>
        <dbReference type="EC" id="2.7.7.6"/>
    </reaction>
</comment>
<comment type="subunit">
    <text evidence="1">The RNAP catalytic core consists of 2 alpha, 1 beta, 1 beta' and 1 omega subunit. When a sigma factor is associated with the core the holoenzyme is formed, which can initiate transcription.</text>
</comment>
<comment type="similarity">
    <text evidence="1">Belongs to the RNA polymerase beta chain family.</text>
</comment>
<sequence length="1368" mass="153216">MQYSFTEKKRIRKSFAKRPIVHQVPFLLATQLESFSTFLQADVPATQRKPEGLQAAFTSVFPIVSHNGFARLEFVSYALSAPAFNIKECQQRGLTYCSALRAKVRLVILDKESPNKPVVKEVKEQEVYMGEIPLMTPTGSFVINGTERVIVSQLHRSPGVFFEHDKGKTHSSGKLLFSARIIPYRGSWLDFEFDPKDILYFRVDRRRKMPVTILLKAIGLTPEQILANFFVFDNFTLMDEGAQLEFVPERLRGEVARFDITDRDGKVIVQKDKRINAKHIRDLEAAKTKFISVPEDYLLGRVLAKNVVDGETGEVIANANDEITESVLEKLREAGIKEIQTLYTNDLDQGPYISSTLRVDETTDKTAARIAIYRMMRPGEPPTEEAVEALFNRLFYSEEAYDLSKVGRMKFNRRVGRDEITGPMTLQDDDILATIKILVELRNGKGEVDDIDHLGNRRVRCVGELAENQFRAGLVRVERAVKERLGQAESENLMPHDLINSKPISSAIREFFGSSQLSQFMDQTNPLSEITHKRRVSALGPGGLTRERAGFEVRDVHPTHYGRVCPIETPEGPNIGLINSLALYAHLNEYGFLETPYRKVVDGKVTDQIDYLSAIEEGRYMIAQANAAIDDEGRLTDELVSSREAGETMMVTPDRIQYMDVAPSQIVSVAASLIPFLEHDDANRALMGSNMQRQAVPCLRPEKPVVGTGIERTCAVDSGTTVQAFRGGVVDYVDAGRIVIRVNDDEAVAGEVGVDIYNLIKYTRSNQNTNINQRPIVKMGDKVSRGDVLADGASTDLGELALGQNMLIAFMPWNGYNFEDSILISEKVVADDRYTSIHIEELNVVARDTKLGPEEITRDISNLAEVQLGRLDESGIVYIGAEVEAGDVLVGKVTPKGETQLTPEEKLLRAIFGEKASDVKDTSLRVPSGMSGTVIDVQVFTREGIQRDKRAQQIIDDELKRYRLDLNDQLRIVEGDAFQRLARMLVGKVANGGPKKLAKGTKIDQAYLEDLDHYHWFDIRLADDEAAAQLEAIKNSIEEKRHQFDLAFEEKRKKLTQGDELPPGVLKMVKVYLAVKRRLQPGDKMAGRHGNKGVVSKIVPIEDMPYMADGRPADVVLNPLGVPSRMNVGQVLEVHLGWAAKGLGWRIGEMLQRQAKIEELRAFLTKIYNESGRAEDLDSFSDDEILELAKNLREGVPFATPVFDGATEDEMAKMLDLAFPDDIAKQLDMNPSKNQVRLYDGRTGEPFERRVTVGYMHYLKLHHLVDDKMHARSTGPYSLVTQQPLGGKAQFGGQRFGEMEVWALEAYGASYVLQEMLTVKSDDVTGRTKVYENLVKGDHVIDAGMPESFNVLVKEIRSLGIDIDLDRN</sequence>
<evidence type="ECO:0000255" key="1">
    <source>
        <dbReference type="HAMAP-Rule" id="MF_01321"/>
    </source>
</evidence>
<proteinExistence type="inferred from homology"/>
<name>RPOB_BURM1</name>